<organism>
    <name type="scientific">Methanocaldococcus jannaschii (strain ATCC 43067 / DSM 2661 / JAL-1 / JCM 10045 / NBRC 100440)</name>
    <name type="common">Methanococcus jannaschii</name>
    <dbReference type="NCBI Taxonomy" id="243232"/>
    <lineage>
        <taxon>Archaea</taxon>
        <taxon>Methanobacteriati</taxon>
        <taxon>Methanobacteriota</taxon>
        <taxon>Methanomada group</taxon>
        <taxon>Methanococci</taxon>
        <taxon>Methanococcales</taxon>
        <taxon>Methanocaldococcaceae</taxon>
        <taxon>Methanocaldococcus</taxon>
    </lineage>
</organism>
<proteinExistence type="inferred from homology"/>
<sequence>MLFLKVRVLDIDLENLVLINSEDLKSSQYFPQDRVVVEFKGKEVIGILHSSTTLINRGEIGLPQKVVKELGVKEGDIVTIKHAEKPKSLPYIRKKMDGNKLKKEEIFEIIDEMVDGKLTNIEISAFVTSLYINGMDMDEIEAMTIRMAETGEMVNWEGHIFDVHSIGGVPGNKYALLVVPIVASAGLKIPKTSSRAITSAAGTADVVEVLTRVDLTIEEIKRVVKETNGCMVWGGALDLAPADDITINVERPLGIDPEPLLLSSVMAKKLAMGVNKLLIDIPTGYGAKVKSIKEASSLARKFIELSDRLRIVTECAITYGGQPIGRAIGPALEAKEALLALEDYTQAPTSLVEKSISLAGILLEMGGVAPTGEGKELAEDLLARGKAHDKFMEIIVAQGGKEVSSDEIEVGKYKADIHSPIDGYVTRISNAGITKIAKEAGAPNDKKAGIYLNVKVGNKVEKGDVLYTIYSDSEERLKSAIKLARILYPIKVEGMLLQKISRF</sequence>
<keyword id="KW-0328">Glycosyltransferase</keyword>
<keyword id="KW-1185">Reference proteome</keyword>
<keyword id="KW-0808">Transferase</keyword>
<reference key="1">
    <citation type="journal article" date="1996" name="Science">
        <title>Complete genome sequence of the methanogenic archaeon, Methanococcus jannaschii.</title>
        <authorList>
            <person name="Bult C.J."/>
            <person name="White O."/>
            <person name="Olsen G.J."/>
            <person name="Zhou L."/>
            <person name="Fleischmann R.D."/>
            <person name="Sutton G.G."/>
            <person name="Blake J.A."/>
            <person name="FitzGerald L.M."/>
            <person name="Clayton R.A."/>
            <person name="Gocayne J.D."/>
            <person name="Kerlavage A.R."/>
            <person name="Dougherty B.A."/>
            <person name="Tomb J.-F."/>
            <person name="Adams M.D."/>
            <person name="Reich C.I."/>
            <person name="Overbeek R."/>
            <person name="Kirkness E.F."/>
            <person name="Weinstock K.G."/>
            <person name="Merrick J.M."/>
            <person name="Glodek A."/>
            <person name="Scott J.L."/>
            <person name="Geoghagen N.S.M."/>
            <person name="Weidman J.F."/>
            <person name="Fuhrmann J.L."/>
            <person name="Nguyen D."/>
            <person name="Utterback T.R."/>
            <person name="Kelley J.M."/>
            <person name="Peterson J.D."/>
            <person name="Sadow P.W."/>
            <person name="Hanna M.C."/>
            <person name="Cotton M.D."/>
            <person name="Roberts K.M."/>
            <person name="Hurst M.A."/>
            <person name="Kaine B.P."/>
            <person name="Borodovsky M."/>
            <person name="Klenk H.-P."/>
            <person name="Fraser C.M."/>
            <person name="Smith H.O."/>
            <person name="Woese C.R."/>
            <person name="Venter J.C."/>
        </authorList>
    </citation>
    <scope>NUCLEOTIDE SEQUENCE [LARGE SCALE GENOMIC DNA]</scope>
    <source>
        <strain>ATCC 43067 / DSM 2661 / JAL-1 / JCM 10045 / NBRC 100440</strain>
    </source>
</reference>
<comment type="function">
    <text evidence="1">Catalyzes the conversion of AMP and phosphate to adenine and ribose 1,5-bisphosphate (R15P). Exhibits phosphorylase activity toward CMP and UMP in addition to AMP. Functions in an archaeal AMP degradation pathway, together with R15P isomerase and RubisCO.</text>
</comment>
<comment type="catalytic activity">
    <reaction evidence="1">
        <text>AMP + phosphate = alpha-D-ribose 1,5-bisphosphate + adenine</text>
        <dbReference type="Rhea" id="RHEA:36975"/>
        <dbReference type="ChEBI" id="CHEBI:16708"/>
        <dbReference type="ChEBI" id="CHEBI:43474"/>
        <dbReference type="ChEBI" id="CHEBI:68688"/>
        <dbReference type="ChEBI" id="CHEBI:456215"/>
        <dbReference type="EC" id="2.4.2.57"/>
    </reaction>
</comment>
<comment type="catalytic activity">
    <reaction evidence="1">
        <text>CMP + phosphate = cytosine + alpha-D-ribose 1,5-bisphosphate</text>
        <dbReference type="Rhea" id="RHEA:36987"/>
        <dbReference type="ChEBI" id="CHEBI:16040"/>
        <dbReference type="ChEBI" id="CHEBI:43474"/>
        <dbReference type="ChEBI" id="CHEBI:60377"/>
        <dbReference type="ChEBI" id="CHEBI:68688"/>
        <dbReference type="EC" id="2.4.2.57"/>
    </reaction>
</comment>
<comment type="catalytic activity">
    <reaction evidence="1">
        <text>UMP + phosphate = alpha-D-ribose 1,5-bisphosphate + uracil</text>
        <dbReference type="Rhea" id="RHEA:36991"/>
        <dbReference type="ChEBI" id="CHEBI:17568"/>
        <dbReference type="ChEBI" id="CHEBI:43474"/>
        <dbReference type="ChEBI" id="CHEBI:57865"/>
        <dbReference type="ChEBI" id="CHEBI:68688"/>
        <dbReference type="EC" id="2.4.2.57"/>
    </reaction>
</comment>
<comment type="similarity">
    <text evidence="1">Belongs to the thymidine/pyrimidine-nucleoside phosphorylase family. Type 2 subfamily.</text>
</comment>
<evidence type="ECO:0000255" key="1">
    <source>
        <dbReference type="HAMAP-Rule" id="MF_02132"/>
    </source>
</evidence>
<name>AMPPA_METJA</name>
<dbReference type="EC" id="2.4.2.57" evidence="1"/>
<dbReference type="EMBL" id="L77117">
    <property type="protein sequence ID" value="AAB98662.1"/>
    <property type="molecule type" value="Genomic_DNA"/>
</dbReference>
<dbReference type="PIR" id="C64383">
    <property type="entry name" value="C64383"/>
</dbReference>
<dbReference type="RefSeq" id="WP_010870172.1">
    <property type="nucleotide sequence ID" value="NC_000909.1"/>
</dbReference>
<dbReference type="SMR" id="Q58081"/>
<dbReference type="FunCoup" id="Q58081">
    <property type="interactions" value="31"/>
</dbReference>
<dbReference type="STRING" id="243232.MJ_0667"/>
<dbReference type="PaxDb" id="243232-MJ_0667"/>
<dbReference type="EnsemblBacteria" id="AAB98662">
    <property type="protein sequence ID" value="AAB98662"/>
    <property type="gene ID" value="MJ_0667"/>
</dbReference>
<dbReference type="GeneID" id="1451533"/>
<dbReference type="KEGG" id="mja:MJ_0667"/>
<dbReference type="eggNOG" id="arCOG02013">
    <property type="taxonomic scope" value="Archaea"/>
</dbReference>
<dbReference type="HOGENOM" id="CLU_025040_6_0_2"/>
<dbReference type="InParanoid" id="Q58081"/>
<dbReference type="OrthoDB" id="9827at2157"/>
<dbReference type="PhylomeDB" id="Q58081"/>
<dbReference type="Proteomes" id="UP000000805">
    <property type="component" value="Chromosome"/>
</dbReference>
<dbReference type="GO" id="GO:0005829">
    <property type="term" value="C:cytosol"/>
    <property type="evidence" value="ECO:0000318"/>
    <property type="project" value="GO_Central"/>
</dbReference>
<dbReference type="GO" id="GO:0004645">
    <property type="term" value="F:1,4-alpha-oligoglucan phosphorylase activity"/>
    <property type="evidence" value="ECO:0007669"/>
    <property type="project" value="InterPro"/>
</dbReference>
<dbReference type="GO" id="GO:0016208">
    <property type="term" value="F:AMP binding"/>
    <property type="evidence" value="ECO:0007669"/>
    <property type="project" value="UniProtKB-UniRule"/>
</dbReference>
<dbReference type="GO" id="GO:0016763">
    <property type="term" value="F:pentosyltransferase activity"/>
    <property type="evidence" value="ECO:0007669"/>
    <property type="project" value="UniProtKB-UniRule"/>
</dbReference>
<dbReference type="GO" id="GO:0006196">
    <property type="term" value="P:AMP catabolic process"/>
    <property type="evidence" value="ECO:0000318"/>
    <property type="project" value="GO_Central"/>
</dbReference>
<dbReference type="GO" id="GO:0046125">
    <property type="term" value="P:pyrimidine deoxyribonucleoside metabolic process"/>
    <property type="evidence" value="ECO:0007669"/>
    <property type="project" value="InterPro"/>
</dbReference>
<dbReference type="GO" id="GO:0006206">
    <property type="term" value="P:pyrimidine nucleobase metabolic process"/>
    <property type="evidence" value="ECO:0007669"/>
    <property type="project" value="InterPro"/>
</dbReference>
<dbReference type="Gene3D" id="1.20.970.50">
    <property type="match status" value="1"/>
</dbReference>
<dbReference type="Gene3D" id="2.40.40.20">
    <property type="match status" value="1"/>
</dbReference>
<dbReference type="Gene3D" id="3.40.1030.10">
    <property type="entry name" value="Nucleoside phosphorylase/phosphoribosyltransferase catalytic domain"/>
    <property type="match status" value="1"/>
</dbReference>
<dbReference type="Gene3D" id="3.90.1170.30">
    <property type="entry name" value="Pyrimidine nucleoside phosphorylase-like, C-terminal domain"/>
    <property type="match status" value="1"/>
</dbReference>
<dbReference type="HAMAP" id="MF_02132">
    <property type="entry name" value="AMP_phosphorylase"/>
    <property type="match status" value="1"/>
</dbReference>
<dbReference type="InterPro" id="IPR017713">
    <property type="entry name" value="AMP_phosphorylase"/>
</dbReference>
<dbReference type="InterPro" id="IPR000312">
    <property type="entry name" value="Glycosyl_Trfase_fam3"/>
</dbReference>
<dbReference type="InterPro" id="IPR017459">
    <property type="entry name" value="Glycosyl_Trfase_fam3_N_dom"/>
</dbReference>
<dbReference type="InterPro" id="IPR036320">
    <property type="entry name" value="Glycosyl_Trfase_fam3_N_dom_sf"/>
</dbReference>
<dbReference type="InterPro" id="IPR035902">
    <property type="entry name" value="Nuc_phospho_transferase"/>
</dbReference>
<dbReference type="InterPro" id="IPR036566">
    <property type="entry name" value="PYNP-like_C_sf"/>
</dbReference>
<dbReference type="InterPro" id="IPR013102">
    <property type="entry name" value="PYNP_C"/>
</dbReference>
<dbReference type="InterPro" id="IPR017872">
    <property type="entry name" value="Pyrmidine_PPase_CS"/>
</dbReference>
<dbReference type="InterPro" id="IPR013466">
    <property type="entry name" value="Thymidine/AMP_Pase"/>
</dbReference>
<dbReference type="InterPro" id="IPR000053">
    <property type="entry name" value="Thymidine/pyrmidine_PPase"/>
</dbReference>
<dbReference type="NCBIfam" id="TIGR03327">
    <property type="entry name" value="AMP_phos"/>
    <property type="match status" value="1"/>
</dbReference>
<dbReference type="NCBIfam" id="TIGR02645">
    <property type="entry name" value="ARCH_P_rylase"/>
    <property type="match status" value="1"/>
</dbReference>
<dbReference type="NCBIfam" id="NF003338">
    <property type="entry name" value="PRK04350.1"/>
    <property type="match status" value="1"/>
</dbReference>
<dbReference type="PANTHER" id="PTHR10515">
    <property type="entry name" value="THYMIDINE PHOSPHORYLASE"/>
    <property type="match status" value="1"/>
</dbReference>
<dbReference type="PANTHER" id="PTHR10515:SF0">
    <property type="entry name" value="THYMIDINE PHOSPHORYLASE"/>
    <property type="match status" value="1"/>
</dbReference>
<dbReference type="Pfam" id="PF02885">
    <property type="entry name" value="Glycos_trans_3N"/>
    <property type="match status" value="1"/>
</dbReference>
<dbReference type="Pfam" id="PF00591">
    <property type="entry name" value="Glycos_transf_3"/>
    <property type="match status" value="1"/>
</dbReference>
<dbReference type="Pfam" id="PF07831">
    <property type="entry name" value="PYNP_C"/>
    <property type="match status" value="1"/>
</dbReference>
<dbReference type="PIRSF" id="PIRSF000478">
    <property type="entry name" value="TP_PyNP"/>
    <property type="match status" value="1"/>
</dbReference>
<dbReference type="SMART" id="SM00941">
    <property type="entry name" value="PYNP_C"/>
    <property type="match status" value="1"/>
</dbReference>
<dbReference type="SUPFAM" id="SSF52418">
    <property type="entry name" value="Nucleoside phosphorylase/phosphoribosyltransferase catalytic domain"/>
    <property type="match status" value="1"/>
</dbReference>
<dbReference type="SUPFAM" id="SSF47648">
    <property type="entry name" value="Nucleoside phosphorylase/phosphoribosyltransferase N-terminal domain"/>
    <property type="match status" value="1"/>
</dbReference>
<dbReference type="SUPFAM" id="SSF54680">
    <property type="entry name" value="Pyrimidine nucleoside phosphorylase C-terminal domain"/>
    <property type="match status" value="1"/>
</dbReference>
<dbReference type="PROSITE" id="PS00647">
    <property type="entry name" value="THYMID_PHOSPHORYLASE"/>
    <property type="match status" value="1"/>
</dbReference>
<gene>
    <name type="ordered locus">MJ0667</name>
</gene>
<feature type="chain" id="PRO_0000059088" description="AMP phosphorylase">
    <location>
        <begin position="1"/>
        <end position="503"/>
    </location>
</feature>
<feature type="active site" description="Proton donor" evidence="1">
    <location>
        <position position="256"/>
    </location>
</feature>
<feature type="binding site" evidence="1">
    <location>
        <position position="168"/>
    </location>
    <ligand>
        <name>AMP</name>
        <dbReference type="ChEBI" id="CHEBI:456215"/>
    </ligand>
</feature>
<feature type="binding site" evidence="1">
    <location>
        <begin position="194"/>
        <end position="199"/>
    </location>
    <ligand>
        <name>AMP</name>
        <dbReference type="ChEBI" id="CHEBI:456215"/>
    </ligand>
</feature>
<feature type="binding site" evidence="1">
    <location>
        <position position="203"/>
    </location>
    <ligand>
        <name>AMP</name>
        <dbReference type="ChEBI" id="CHEBI:456215"/>
    </ligand>
</feature>
<feature type="binding site" evidence="1">
    <location>
        <position position="264"/>
    </location>
    <ligand>
        <name>AMP</name>
        <dbReference type="ChEBI" id="CHEBI:456215"/>
    </ligand>
</feature>
<feature type="binding site" evidence="1">
    <location>
        <position position="288"/>
    </location>
    <ligand>
        <name>AMP</name>
        <dbReference type="ChEBI" id="CHEBI:456215"/>
    </ligand>
</feature>
<accession>Q58081</accession>
<protein>
    <recommendedName>
        <fullName evidence="1">AMP phosphorylase</fullName>
        <shortName evidence="1">AMPpase</shortName>
        <ecNumber evidence="1">2.4.2.57</ecNumber>
    </recommendedName>
    <alternativeName>
        <fullName evidence="1">Nucleoside monophosphate phosphorylase</fullName>
        <shortName evidence="1">NMP phosphorylase</shortName>
    </alternativeName>
</protein>